<evidence type="ECO:0000255" key="1">
    <source>
        <dbReference type="HAMAP-Rule" id="MF_00082"/>
    </source>
</evidence>
<gene>
    <name evidence="1" type="primary">argB</name>
    <name type="ordered locus">Krad_3159</name>
</gene>
<name>ARGB_KINRD</name>
<protein>
    <recommendedName>
        <fullName evidence="1">Acetylglutamate kinase</fullName>
        <ecNumber evidence="1">2.7.2.8</ecNumber>
    </recommendedName>
    <alternativeName>
        <fullName evidence="1">N-acetyl-L-glutamate 5-phosphotransferase</fullName>
    </alternativeName>
    <alternativeName>
        <fullName evidence="1">NAG kinase</fullName>
        <shortName evidence="1">NAGK</shortName>
    </alternativeName>
</protein>
<organism>
    <name type="scientific">Kineococcus radiotolerans (strain ATCC BAA-149 / DSM 14245 / SRS30216)</name>
    <dbReference type="NCBI Taxonomy" id="266940"/>
    <lineage>
        <taxon>Bacteria</taxon>
        <taxon>Bacillati</taxon>
        <taxon>Actinomycetota</taxon>
        <taxon>Actinomycetes</taxon>
        <taxon>Kineosporiales</taxon>
        <taxon>Kineosporiaceae</taxon>
        <taxon>Kineococcus</taxon>
    </lineage>
</organism>
<dbReference type="EC" id="2.7.2.8" evidence="1"/>
<dbReference type="EMBL" id="CP000750">
    <property type="protein sequence ID" value="ABS04623.1"/>
    <property type="molecule type" value="Genomic_DNA"/>
</dbReference>
<dbReference type="RefSeq" id="WP_012087124.1">
    <property type="nucleotide sequence ID" value="NC_009664.2"/>
</dbReference>
<dbReference type="SMR" id="A6WCT4"/>
<dbReference type="STRING" id="266940.Krad_3159"/>
<dbReference type="KEGG" id="kra:Krad_3159"/>
<dbReference type="eggNOG" id="COG0548">
    <property type="taxonomic scope" value="Bacteria"/>
</dbReference>
<dbReference type="HOGENOM" id="CLU_053680_0_1_11"/>
<dbReference type="OrthoDB" id="9803155at2"/>
<dbReference type="UniPathway" id="UPA00068">
    <property type="reaction ID" value="UER00107"/>
</dbReference>
<dbReference type="Proteomes" id="UP000001116">
    <property type="component" value="Chromosome"/>
</dbReference>
<dbReference type="GO" id="GO:0005737">
    <property type="term" value="C:cytoplasm"/>
    <property type="evidence" value="ECO:0007669"/>
    <property type="project" value="UniProtKB-SubCell"/>
</dbReference>
<dbReference type="GO" id="GO:0003991">
    <property type="term" value="F:acetylglutamate kinase activity"/>
    <property type="evidence" value="ECO:0007669"/>
    <property type="project" value="UniProtKB-UniRule"/>
</dbReference>
<dbReference type="GO" id="GO:0005524">
    <property type="term" value="F:ATP binding"/>
    <property type="evidence" value="ECO:0007669"/>
    <property type="project" value="UniProtKB-UniRule"/>
</dbReference>
<dbReference type="GO" id="GO:0042450">
    <property type="term" value="P:arginine biosynthetic process via ornithine"/>
    <property type="evidence" value="ECO:0007669"/>
    <property type="project" value="UniProtKB-UniRule"/>
</dbReference>
<dbReference type="GO" id="GO:0006526">
    <property type="term" value="P:L-arginine biosynthetic process"/>
    <property type="evidence" value="ECO:0007669"/>
    <property type="project" value="UniProtKB-UniPathway"/>
</dbReference>
<dbReference type="CDD" id="cd04250">
    <property type="entry name" value="AAK_NAGK-C"/>
    <property type="match status" value="1"/>
</dbReference>
<dbReference type="FunFam" id="3.40.1160.10:FF:000004">
    <property type="entry name" value="Acetylglutamate kinase"/>
    <property type="match status" value="1"/>
</dbReference>
<dbReference type="Gene3D" id="3.40.1160.10">
    <property type="entry name" value="Acetylglutamate kinase-like"/>
    <property type="match status" value="1"/>
</dbReference>
<dbReference type="HAMAP" id="MF_00082">
    <property type="entry name" value="ArgB"/>
    <property type="match status" value="1"/>
</dbReference>
<dbReference type="InterPro" id="IPR036393">
    <property type="entry name" value="AceGlu_kinase-like_sf"/>
</dbReference>
<dbReference type="InterPro" id="IPR004662">
    <property type="entry name" value="AcgluKinase_fam"/>
</dbReference>
<dbReference type="InterPro" id="IPR037528">
    <property type="entry name" value="ArgB"/>
</dbReference>
<dbReference type="InterPro" id="IPR001048">
    <property type="entry name" value="Asp/Glu/Uridylate_kinase"/>
</dbReference>
<dbReference type="InterPro" id="IPR001057">
    <property type="entry name" value="Glu/AcGlu_kinase"/>
</dbReference>
<dbReference type="InterPro" id="IPR041727">
    <property type="entry name" value="NAGK-C"/>
</dbReference>
<dbReference type="NCBIfam" id="TIGR00761">
    <property type="entry name" value="argB"/>
    <property type="match status" value="1"/>
</dbReference>
<dbReference type="PANTHER" id="PTHR23342">
    <property type="entry name" value="N-ACETYLGLUTAMATE SYNTHASE"/>
    <property type="match status" value="1"/>
</dbReference>
<dbReference type="PANTHER" id="PTHR23342:SF0">
    <property type="entry name" value="N-ACETYLGLUTAMATE SYNTHASE, MITOCHONDRIAL"/>
    <property type="match status" value="1"/>
</dbReference>
<dbReference type="Pfam" id="PF00696">
    <property type="entry name" value="AA_kinase"/>
    <property type="match status" value="1"/>
</dbReference>
<dbReference type="PIRSF" id="PIRSF000728">
    <property type="entry name" value="NAGK"/>
    <property type="match status" value="1"/>
</dbReference>
<dbReference type="PRINTS" id="PR00474">
    <property type="entry name" value="GLU5KINASE"/>
</dbReference>
<dbReference type="SUPFAM" id="SSF53633">
    <property type="entry name" value="Carbamate kinase-like"/>
    <property type="match status" value="1"/>
</dbReference>
<sequence length="300" mass="31586">MSDLTELTAEDKANVLVEALPWLQKWHGALVVLKYGGNAMVDEDLKRAFAEDVVFLRTAGLRPVVVHGGGPQISTMLDRLQIPSEFRGGLRVTTPEAMDVVRMVLTGQVGRELVGLLNAHGPLAVGLSGEDAGLLRATRRHAVVDGEPVDVGLVGDVVGVDPRAVVDLLAAGRIPVISTIAPEVDADGNPLHGQVLNVNADTAASAIAVALEAQKFVVMTDVAGLYRDWPNRDSLVREITAGDLAALLPSLESGMVPKMEACLRAVRGGVPRATVIDGRQAHSVLLEVFTTSGNGTMVVP</sequence>
<keyword id="KW-0028">Amino-acid biosynthesis</keyword>
<keyword id="KW-0055">Arginine biosynthesis</keyword>
<keyword id="KW-0067">ATP-binding</keyword>
<keyword id="KW-0963">Cytoplasm</keyword>
<keyword id="KW-0418">Kinase</keyword>
<keyword id="KW-0547">Nucleotide-binding</keyword>
<keyword id="KW-1185">Reference proteome</keyword>
<keyword id="KW-0808">Transferase</keyword>
<comment type="function">
    <text evidence="1">Catalyzes the ATP-dependent phosphorylation of N-acetyl-L-glutamate.</text>
</comment>
<comment type="catalytic activity">
    <reaction evidence="1">
        <text>N-acetyl-L-glutamate + ATP = N-acetyl-L-glutamyl 5-phosphate + ADP</text>
        <dbReference type="Rhea" id="RHEA:14629"/>
        <dbReference type="ChEBI" id="CHEBI:30616"/>
        <dbReference type="ChEBI" id="CHEBI:44337"/>
        <dbReference type="ChEBI" id="CHEBI:57936"/>
        <dbReference type="ChEBI" id="CHEBI:456216"/>
        <dbReference type="EC" id="2.7.2.8"/>
    </reaction>
</comment>
<comment type="pathway">
    <text evidence="1">Amino-acid biosynthesis; L-arginine biosynthesis; N(2)-acetyl-L-ornithine from L-glutamate: step 2/4.</text>
</comment>
<comment type="subcellular location">
    <subcellularLocation>
        <location evidence="1">Cytoplasm</location>
    </subcellularLocation>
</comment>
<comment type="similarity">
    <text evidence="1">Belongs to the acetylglutamate kinase family. ArgB subfamily.</text>
</comment>
<feature type="chain" id="PRO_0000335638" description="Acetylglutamate kinase">
    <location>
        <begin position="1"/>
        <end position="300"/>
    </location>
</feature>
<feature type="binding site" evidence="1">
    <location>
        <begin position="69"/>
        <end position="70"/>
    </location>
    <ligand>
        <name>substrate</name>
    </ligand>
</feature>
<feature type="binding site" evidence="1">
    <location>
        <position position="91"/>
    </location>
    <ligand>
        <name>substrate</name>
    </ligand>
</feature>
<feature type="binding site" evidence="1">
    <location>
        <position position="197"/>
    </location>
    <ligand>
        <name>substrate</name>
    </ligand>
</feature>
<feature type="site" description="Transition state stabilizer" evidence="1">
    <location>
        <position position="34"/>
    </location>
</feature>
<feature type="site" description="Transition state stabilizer" evidence="1">
    <location>
        <position position="258"/>
    </location>
</feature>
<reference key="1">
    <citation type="journal article" date="2008" name="PLoS ONE">
        <title>Survival in nuclear waste, extreme resistance, and potential applications gleaned from the genome sequence of Kineococcus radiotolerans SRS30216.</title>
        <authorList>
            <person name="Bagwell C.E."/>
            <person name="Bhat S."/>
            <person name="Hawkins G.M."/>
            <person name="Smith B.W."/>
            <person name="Biswas T."/>
            <person name="Hoover T.R."/>
            <person name="Saunders E."/>
            <person name="Han C.S."/>
            <person name="Tsodikov O.V."/>
            <person name="Shimkets L.J."/>
        </authorList>
    </citation>
    <scope>NUCLEOTIDE SEQUENCE [LARGE SCALE GENOMIC DNA]</scope>
    <source>
        <strain>ATCC BAA-149 / DSM 14245 / SRS30216</strain>
    </source>
</reference>
<accession>A6WCT4</accession>
<proteinExistence type="inferred from homology"/>